<comment type="function">
    <text evidence="1 4">Binds to acetylated and methylated histones, including H3K4me3 and H4K20me3, probably acting as a histone reader that recognizes chromatin marks to mediate downstream cellular effects (By similarity). Promotes canonical WNT signaling, and is involved in the down-regulation of cell proliferation (PubMed:36927955).</text>
</comment>
<comment type="subunit">
    <text evidence="1">Interacts with C11orf84/SPINDOC. Associates with chromatin.</text>
</comment>
<comment type="subcellular location">
    <subcellularLocation>
        <location evidence="1">Cytoplasm</location>
    </subcellularLocation>
    <subcellularLocation>
        <location evidence="1">Nucleus</location>
    </subcellularLocation>
</comment>
<comment type="similarity">
    <text evidence="5">Belongs to the SPIN/STSY family.</text>
</comment>
<evidence type="ECO:0000250" key="1">
    <source>
        <dbReference type="UniProtKB" id="Q56A73"/>
    </source>
</evidence>
<evidence type="ECO:0000250" key="2">
    <source>
        <dbReference type="UniProtKB" id="Q9Y657"/>
    </source>
</evidence>
<evidence type="ECO:0000255" key="3"/>
<evidence type="ECO:0000269" key="4">
    <source>
    </source>
</evidence>
<evidence type="ECO:0000305" key="5"/>
<gene>
    <name type="primary">Spin4</name>
</gene>
<sequence>MSPPTVPPTGVDGVSAYLMKKRHTHKKQRRKPTFLTHRNIVGCRIQHGWKEGNEPVEQWKGTVLEQVSVKPTLYIIKYDGKDSVYGLELHRDKRVLALEILPERVPSPRIDSRLADSLVGKAVGHVFEGEHGKKDEWKGMVLARAPIMDTWFYITYEKDPVLYMYTLLDDYKDGDLRIIPDSNYYFPAAEQEPGEVLDSLVGKQVEHAKDDGSKRTGIFIHQVVAKPSVYFIKFDDDIHIYVYGLVKTP</sequence>
<organism>
    <name type="scientific">Mus musculus</name>
    <name type="common">Mouse</name>
    <dbReference type="NCBI Taxonomy" id="10090"/>
    <lineage>
        <taxon>Eukaryota</taxon>
        <taxon>Metazoa</taxon>
        <taxon>Chordata</taxon>
        <taxon>Craniata</taxon>
        <taxon>Vertebrata</taxon>
        <taxon>Euteleostomi</taxon>
        <taxon>Mammalia</taxon>
        <taxon>Eutheria</taxon>
        <taxon>Euarchontoglires</taxon>
        <taxon>Glires</taxon>
        <taxon>Rodentia</taxon>
        <taxon>Myomorpha</taxon>
        <taxon>Muroidea</taxon>
        <taxon>Muridae</taxon>
        <taxon>Murinae</taxon>
        <taxon>Mus</taxon>
        <taxon>Mus</taxon>
    </lineage>
</organism>
<proteinExistence type="evidence at transcript level"/>
<name>SPIN4_MOUSE</name>
<feature type="chain" id="PRO_0000313795" description="Spindlin-4">
    <location>
        <begin position="1"/>
        <end position="249"/>
    </location>
</feature>
<feature type="region of interest" description="Tudor-like domain 1" evidence="3">
    <location>
        <begin position="41"/>
        <end position="90"/>
    </location>
</feature>
<feature type="region of interest" description="Histone H3K4me3 and H3R8me2a binding" evidence="2">
    <location>
        <begin position="80"/>
        <end position="85"/>
    </location>
</feature>
<feature type="region of interest" description="Tudor-like domain 2" evidence="3">
    <location>
        <begin position="119"/>
        <end position="168"/>
    </location>
</feature>
<feature type="region of interest" description="Histone H3K4me3 and H3R8me2a binding" evidence="2">
    <location>
        <position position="128"/>
    </location>
</feature>
<feature type="region of interest" description="Tudor-like domain 3" evidence="3">
    <location>
        <begin position="201"/>
        <end position="246"/>
    </location>
</feature>
<feature type="region of interest" description="Histone H3K4me3 and H3R8me2a binding" evidence="2">
    <location>
        <begin position="237"/>
        <end position="239"/>
    </location>
</feature>
<feature type="site" description="Histone H3K4me3 and H3R8me2a binding" evidence="2">
    <location>
        <position position="159"/>
    </location>
</feature>
<feature type="site" description="Histone H3K4me3 and H3R8me2a binding" evidence="2">
    <location>
        <position position="170"/>
    </location>
</feature>
<feature type="sequence conflict" description="In Ref. 1; BAC33186." evidence="5" ref="1">
    <original>V</original>
    <variation>G</variation>
    <location>
        <position position="41"/>
    </location>
</feature>
<keyword id="KW-0963">Cytoplasm</keyword>
<keyword id="KW-0539">Nucleus</keyword>
<keyword id="KW-1185">Reference proteome</keyword>
<accession>Q8K1L2</accession>
<accession>Q8BXD0</accession>
<reference key="1">
    <citation type="journal article" date="2005" name="Science">
        <title>The transcriptional landscape of the mammalian genome.</title>
        <authorList>
            <person name="Carninci P."/>
            <person name="Kasukawa T."/>
            <person name="Katayama S."/>
            <person name="Gough J."/>
            <person name="Frith M.C."/>
            <person name="Maeda N."/>
            <person name="Oyama R."/>
            <person name="Ravasi T."/>
            <person name="Lenhard B."/>
            <person name="Wells C."/>
            <person name="Kodzius R."/>
            <person name="Shimokawa K."/>
            <person name="Bajic V.B."/>
            <person name="Brenner S.E."/>
            <person name="Batalov S."/>
            <person name="Forrest A.R."/>
            <person name="Zavolan M."/>
            <person name="Davis M.J."/>
            <person name="Wilming L.G."/>
            <person name="Aidinis V."/>
            <person name="Allen J.E."/>
            <person name="Ambesi-Impiombato A."/>
            <person name="Apweiler R."/>
            <person name="Aturaliya R.N."/>
            <person name="Bailey T.L."/>
            <person name="Bansal M."/>
            <person name="Baxter L."/>
            <person name="Beisel K.W."/>
            <person name="Bersano T."/>
            <person name="Bono H."/>
            <person name="Chalk A.M."/>
            <person name="Chiu K.P."/>
            <person name="Choudhary V."/>
            <person name="Christoffels A."/>
            <person name="Clutterbuck D.R."/>
            <person name="Crowe M.L."/>
            <person name="Dalla E."/>
            <person name="Dalrymple B.P."/>
            <person name="de Bono B."/>
            <person name="Della Gatta G."/>
            <person name="di Bernardo D."/>
            <person name="Down T."/>
            <person name="Engstrom P."/>
            <person name="Fagiolini M."/>
            <person name="Faulkner G."/>
            <person name="Fletcher C.F."/>
            <person name="Fukushima T."/>
            <person name="Furuno M."/>
            <person name="Futaki S."/>
            <person name="Gariboldi M."/>
            <person name="Georgii-Hemming P."/>
            <person name="Gingeras T.R."/>
            <person name="Gojobori T."/>
            <person name="Green R.E."/>
            <person name="Gustincich S."/>
            <person name="Harbers M."/>
            <person name="Hayashi Y."/>
            <person name="Hensch T.K."/>
            <person name="Hirokawa N."/>
            <person name="Hill D."/>
            <person name="Huminiecki L."/>
            <person name="Iacono M."/>
            <person name="Ikeo K."/>
            <person name="Iwama A."/>
            <person name="Ishikawa T."/>
            <person name="Jakt M."/>
            <person name="Kanapin A."/>
            <person name="Katoh M."/>
            <person name="Kawasawa Y."/>
            <person name="Kelso J."/>
            <person name="Kitamura H."/>
            <person name="Kitano H."/>
            <person name="Kollias G."/>
            <person name="Krishnan S.P."/>
            <person name="Kruger A."/>
            <person name="Kummerfeld S.K."/>
            <person name="Kurochkin I.V."/>
            <person name="Lareau L.F."/>
            <person name="Lazarevic D."/>
            <person name="Lipovich L."/>
            <person name="Liu J."/>
            <person name="Liuni S."/>
            <person name="McWilliam S."/>
            <person name="Madan Babu M."/>
            <person name="Madera M."/>
            <person name="Marchionni L."/>
            <person name="Matsuda H."/>
            <person name="Matsuzawa S."/>
            <person name="Miki H."/>
            <person name="Mignone F."/>
            <person name="Miyake S."/>
            <person name="Morris K."/>
            <person name="Mottagui-Tabar S."/>
            <person name="Mulder N."/>
            <person name="Nakano N."/>
            <person name="Nakauchi H."/>
            <person name="Ng P."/>
            <person name="Nilsson R."/>
            <person name="Nishiguchi S."/>
            <person name="Nishikawa S."/>
            <person name="Nori F."/>
            <person name="Ohara O."/>
            <person name="Okazaki Y."/>
            <person name="Orlando V."/>
            <person name="Pang K.C."/>
            <person name="Pavan W.J."/>
            <person name="Pavesi G."/>
            <person name="Pesole G."/>
            <person name="Petrovsky N."/>
            <person name="Piazza S."/>
            <person name="Reed J."/>
            <person name="Reid J.F."/>
            <person name="Ring B.Z."/>
            <person name="Ringwald M."/>
            <person name="Rost B."/>
            <person name="Ruan Y."/>
            <person name="Salzberg S.L."/>
            <person name="Sandelin A."/>
            <person name="Schneider C."/>
            <person name="Schoenbach C."/>
            <person name="Sekiguchi K."/>
            <person name="Semple C.A."/>
            <person name="Seno S."/>
            <person name="Sessa L."/>
            <person name="Sheng Y."/>
            <person name="Shibata Y."/>
            <person name="Shimada H."/>
            <person name="Shimada K."/>
            <person name="Silva D."/>
            <person name="Sinclair B."/>
            <person name="Sperling S."/>
            <person name="Stupka E."/>
            <person name="Sugiura K."/>
            <person name="Sultana R."/>
            <person name="Takenaka Y."/>
            <person name="Taki K."/>
            <person name="Tammoja K."/>
            <person name="Tan S.L."/>
            <person name="Tang S."/>
            <person name="Taylor M.S."/>
            <person name="Tegner J."/>
            <person name="Teichmann S.A."/>
            <person name="Ueda H.R."/>
            <person name="van Nimwegen E."/>
            <person name="Verardo R."/>
            <person name="Wei C.L."/>
            <person name="Yagi K."/>
            <person name="Yamanishi H."/>
            <person name="Zabarovsky E."/>
            <person name="Zhu S."/>
            <person name="Zimmer A."/>
            <person name="Hide W."/>
            <person name="Bult C."/>
            <person name="Grimmond S.M."/>
            <person name="Teasdale R.D."/>
            <person name="Liu E.T."/>
            <person name="Brusic V."/>
            <person name="Quackenbush J."/>
            <person name="Wahlestedt C."/>
            <person name="Mattick J.S."/>
            <person name="Hume D.A."/>
            <person name="Kai C."/>
            <person name="Sasaki D."/>
            <person name="Tomaru Y."/>
            <person name="Fukuda S."/>
            <person name="Kanamori-Katayama M."/>
            <person name="Suzuki M."/>
            <person name="Aoki J."/>
            <person name="Arakawa T."/>
            <person name="Iida J."/>
            <person name="Imamura K."/>
            <person name="Itoh M."/>
            <person name="Kato T."/>
            <person name="Kawaji H."/>
            <person name="Kawagashira N."/>
            <person name="Kawashima T."/>
            <person name="Kojima M."/>
            <person name="Kondo S."/>
            <person name="Konno H."/>
            <person name="Nakano K."/>
            <person name="Ninomiya N."/>
            <person name="Nishio T."/>
            <person name="Okada M."/>
            <person name="Plessy C."/>
            <person name="Shibata K."/>
            <person name="Shiraki T."/>
            <person name="Suzuki S."/>
            <person name="Tagami M."/>
            <person name="Waki K."/>
            <person name="Watahiki A."/>
            <person name="Okamura-Oho Y."/>
            <person name="Suzuki H."/>
            <person name="Kawai J."/>
            <person name="Hayashizaki Y."/>
        </authorList>
    </citation>
    <scope>NUCLEOTIDE SEQUENCE [LARGE SCALE MRNA]</scope>
    <source>
        <strain>C57BL/6J</strain>
        <strain>NOD</strain>
        <tissue>Cerebellum</tissue>
        <tissue>Head</tissue>
    </source>
</reference>
<reference key="2">
    <citation type="journal article" date="2009" name="PLoS Biol.">
        <title>Lineage-specific biology revealed by a finished genome assembly of the mouse.</title>
        <authorList>
            <person name="Church D.M."/>
            <person name="Goodstadt L."/>
            <person name="Hillier L.W."/>
            <person name="Zody M.C."/>
            <person name="Goldstein S."/>
            <person name="She X."/>
            <person name="Bult C.J."/>
            <person name="Agarwala R."/>
            <person name="Cherry J.L."/>
            <person name="DiCuccio M."/>
            <person name="Hlavina W."/>
            <person name="Kapustin Y."/>
            <person name="Meric P."/>
            <person name="Maglott D."/>
            <person name="Birtle Z."/>
            <person name="Marques A.C."/>
            <person name="Graves T."/>
            <person name="Zhou S."/>
            <person name="Teague B."/>
            <person name="Potamousis K."/>
            <person name="Churas C."/>
            <person name="Place M."/>
            <person name="Herschleb J."/>
            <person name="Runnheim R."/>
            <person name="Forrest D."/>
            <person name="Amos-Landgraf J."/>
            <person name="Schwartz D.C."/>
            <person name="Cheng Z."/>
            <person name="Lindblad-Toh K."/>
            <person name="Eichler E.E."/>
            <person name="Ponting C.P."/>
        </authorList>
    </citation>
    <scope>NUCLEOTIDE SEQUENCE [LARGE SCALE GENOMIC DNA]</scope>
    <source>
        <strain>C57BL/6J</strain>
    </source>
</reference>
<reference key="3">
    <citation type="journal article" date="2004" name="Genome Res.">
        <title>The status, quality, and expansion of the NIH full-length cDNA project: the Mammalian Gene Collection (MGC).</title>
        <authorList>
            <consortium name="The MGC Project Team"/>
        </authorList>
    </citation>
    <scope>NUCLEOTIDE SEQUENCE [LARGE SCALE MRNA]</scope>
    <source>
        <strain>FVB/N</strain>
        <tissue>Mammary tumor</tissue>
    </source>
</reference>
<reference key="4">
    <citation type="journal article" date="2023" name="JCI Insight">
        <title>Loss-of-function variant in SPIN4 causes an X-linked overgrowth syndrome.</title>
        <authorList>
            <person name="Lui J.C."/>
            <person name="Wagner J."/>
            <person name="Zhou E."/>
            <person name="Dong L."/>
            <person name="Barnes K.M."/>
            <person name="Jee Y.H."/>
            <person name="Baron J."/>
        </authorList>
    </citation>
    <scope>FUNCTION</scope>
</reference>
<dbReference type="EMBL" id="AK036158">
    <property type="protein sequence ID" value="BAC29325.1"/>
    <property type="molecule type" value="mRNA"/>
</dbReference>
<dbReference type="EMBL" id="AK043030">
    <property type="protein sequence ID" value="BAC31440.1"/>
    <property type="molecule type" value="mRNA"/>
</dbReference>
<dbReference type="EMBL" id="AK047896">
    <property type="protein sequence ID" value="BAC33186.1"/>
    <property type="molecule type" value="mRNA"/>
</dbReference>
<dbReference type="EMBL" id="AK147852">
    <property type="protein sequence ID" value="BAE28181.1"/>
    <property type="molecule type" value="mRNA"/>
</dbReference>
<dbReference type="EMBL" id="AK155170">
    <property type="protein sequence ID" value="BAE33091.1"/>
    <property type="molecule type" value="mRNA"/>
</dbReference>
<dbReference type="EMBL" id="BX470092">
    <property type="status" value="NOT_ANNOTATED_CDS"/>
    <property type="molecule type" value="Genomic_DNA"/>
</dbReference>
<dbReference type="EMBL" id="BC027796">
    <property type="protein sequence ID" value="AAH27796.1"/>
    <property type="molecule type" value="mRNA"/>
</dbReference>
<dbReference type="CCDS" id="CCDS30282.1"/>
<dbReference type="RefSeq" id="NP_848868.1">
    <property type="nucleotide sequence ID" value="NM_178753.4"/>
</dbReference>
<dbReference type="SMR" id="Q8K1L2"/>
<dbReference type="BioGRID" id="234807">
    <property type="interactions" value="1"/>
</dbReference>
<dbReference type="FunCoup" id="Q8K1L2">
    <property type="interactions" value="842"/>
</dbReference>
<dbReference type="STRING" id="10090.ENSMUSP00000094095"/>
<dbReference type="PhosphoSitePlus" id="Q8K1L2"/>
<dbReference type="PaxDb" id="10090-ENSMUSP00000094095"/>
<dbReference type="PeptideAtlas" id="Q8K1L2"/>
<dbReference type="ProteomicsDB" id="258721"/>
<dbReference type="Pumba" id="Q8K1L2"/>
<dbReference type="Antibodypedia" id="52266">
    <property type="antibodies" value="69 antibodies from 14 providers"/>
</dbReference>
<dbReference type="DNASU" id="270624"/>
<dbReference type="Ensembl" id="ENSMUST00000096367.5">
    <property type="protein sequence ID" value="ENSMUSP00000094095.4"/>
    <property type="gene ID" value="ENSMUSG00000071722.5"/>
</dbReference>
<dbReference type="GeneID" id="270624"/>
<dbReference type="KEGG" id="mmu:270624"/>
<dbReference type="UCSC" id="uc009tts.2">
    <property type="organism name" value="mouse"/>
</dbReference>
<dbReference type="AGR" id="MGI:2444925"/>
<dbReference type="CTD" id="139886"/>
<dbReference type="MGI" id="MGI:2444925">
    <property type="gene designation" value="Spin4"/>
</dbReference>
<dbReference type="VEuPathDB" id="HostDB:ENSMUSG00000071722"/>
<dbReference type="eggNOG" id="ENOG502QRYD">
    <property type="taxonomic scope" value="Eukaryota"/>
</dbReference>
<dbReference type="GeneTree" id="ENSGT00950000182925"/>
<dbReference type="HOGENOM" id="CLU_068595_0_0_1"/>
<dbReference type="InParanoid" id="Q8K1L2"/>
<dbReference type="OMA" id="HGKKDEW"/>
<dbReference type="OrthoDB" id="9944558at2759"/>
<dbReference type="PhylomeDB" id="Q8K1L2"/>
<dbReference type="TreeFam" id="TF332665"/>
<dbReference type="BioGRID-ORCS" id="270624">
    <property type="hits" value="2 hits in 76 CRISPR screens"/>
</dbReference>
<dbReference type="PRO" id="PR:Q8K1L2"/>
<dbReference type="Proteomes" id="UP000000589">
    <property type="component" value="Chromosome X"/>
</dbReference>
<dbReference type="RNAct" id="Q8K1L2">
    <property type="molecule type" value="protein"/>
</dbReference>
<dbReference type="Bgee" id="ENSMUSG00000071722">
    <property type="expression patterns" value="Expressed in vas deferens and 140 other cell types or tissues"/>
</dbReference>
<dbReference type="GO" id="GO:0000785">
    <property type="term" value="C:chromatin"/>
    <property type="evidence" value="ECO:0000250"/>
    <property type="project" value="UniProtKB"/>
</dbReference>
<dbReference type="GO" id="GO:0005737">
    <property type="term" value="C:cytoplasm"/>
    <property type="evidence" value="ECO:0000250"/>
    <property type="project" value="UniProtKB"/>
</dbReference>
<dbReference type="GO" id="GO:0005634">
    <property type="term" value="C:nucleus"/>
    <property type="evidence" value="ECO:0000250"/>
    <property type="project" value="UniProtKB"/>
</dbReference>
<dbReference type="GO" id="GO:0140002">
    <property type="term" value="F:histone H3K4me3 reader activity"/>
    <property type="evidence" value="ECO:0000250"/>
    <property type="project" value="UniProtKB"/>
</dbReference>
<dbReference type="GO" id="GO:0035064">
    <property type="term" value="F:methylated histone binding"/>
    <property type="evidence" value="ECO:0007669"/>
    <property type="project" value="Ensembl"/>
</dbReference>
<dbReference type="GO" id="GO:0007276">
    <property type="term" value="P:gamete generation"/>
    <property type="evidence" value="ECO:0007669"/>
    <property type="project" value="InterPro"/>
</dbReference>
<dbReference type="GO" id="GO:0008285">
    <property type="term" value="P:negative regulation of cell population proliferation"/>
    <property type="evidence" value="ECO:0000250"/>
    <property type="project" value="UniProtKB"/>
</dbReference>
<dbReference type="GO" id="GO:0090263">
    <property type="term" value="P:positive regulation of canonical Wnt signaling pathway"/>
    <property type="evidence" value="ECO:0000315"/>
    <property type="project" value="UniProtKB"/>
</dbReference>
<dbReference type="FunFam" id="2.80.10.70:FF:000001">
    <property type="entry name" value="Spindlin 1"/>
    <property type="match status" value="1"/>
</dbReference>
<dbReference type="Gene3D" id="2.80.10.70">
    <property type="entry name" value="Spindlin/Ssty"/>
    <property type="match status" value="1"/>
</dbReference>
<dbReference type="InterPro" id="IPR003671">
    <property type="entry name" value="SPIN/Ssty"/>
</dbReference>
<dbReference type="InterPro" id="IPR042567">
    <property type="entry name" value="SPIN/Ssty_sf"/>
</dbReference>
<dbReference type="PANTHER" id="PTHR10405">
    <property type="entry name" value="SPINDLIN"/>
    <property type="match status" value="1"/>
</dbReference>
<dbReference type="Pfam" id="PF02513">
    <property type="entry name" value="Spin-Ssty"/>
    <property type="match status" value="3"/>
</dbReference>
<protein>
    <recommendedName>
        <fullName>Spindlin-4</fullName>
    </recommendedName>
</protein>